<accession>P52504</accession>
<comment type="function">
    <text evidence="2">Accessory subunit of the mitochondrial membrane respiratory chain NADH dehydrogenase (Complex I), that is believed not to be involved in catalysis. Complex I functions in the transfer of electrons from NADH to the respiratory chain. The immediate electron acceptor for the enzyme is believed to be ubiquinone.</text>
</comment>
<comment type="subunit">
    <text evidence="2">Mammalian complex I is composed of 45 different subunits. This is a component of the iron-sulfur (IP) fragment of the enzyme.</text>
</comment>
<comment type="subcellular location">
    <subcellularLocation>
        <location evidence="2">Mitochondrion inner membrane</location>
        <topology evidence="2">Peripheral membrane protein</topology>
        <orientation evidence="2">Matrix side</orientation>
    </subcellularLocation>
</comment>
<comment type="similarity">
    <text evidence="4">Belongs to the complex I NDUFS6 subunit family.</text>
</comment>
<evidence type="ECO:0000250" key="1"/>
<evidence type="ECO:0000250" key="2">
    <source>
        <dbReference type="UniProtKB" id="O75380"/>
    </source>
</evidence>
<evidence type="ECO:0000250" key="3">
    <source>
        <dbReference type="UniProtKB" id="P52503"/>
    </source>
</evidence>
<evidence type="ECO:0000305" key="4"/>
<sequence>MAAALTFRRLLALPRAARGFGVRVSLSGEKITHTGQVSDGKDYRGIRFVDRQKEVNENFAIDLIAQQPVNEVDRRIIACDGGGGALGHPKVYINLDKETKTGTCAYCGLQFKQQHH</sequence>
<proteinExistence type="inferred from homology"/>
<organism>
    <name type="scientific">Rattus norvegicus</name>
    <name type="common">Rat</name>
    <dbReference type="NCBI Taxonomy" id="10116"/>
    <lineage>
        <taxon>Eukaryota</taxon>
        <taxon>Metazoa</taxon>
        <taxon>Chordata</taxon>
        <taxon>Craniata</taxon>
        <taxon>Vertebrata</taxon>
        <taxon>Euteleostomi</taxon>
        <taxon>Mammalia</taxon>
        <taxon>Eutheria</taxon>
        <taxon>Euarchontoglires</taxon>
        <taxon>Glires</taxon>
        <taxon>Rodentia</taxon>
        <taxon>Myomorpha</taxon>
        <taxon>Muroidea</taxon>
        <taxon>Muridae</taxon>
        <taxon>Murinae</taxon>
        <taxon>Rattus</taxon>
    </lineage>
</organism>
<reference key="1">
    <citation type="journal article" date="1995" name="Gene">
        <title>Genomic sequence, structural organization and evolutionary conservation of the 13.2-kDa subunit of rat NADH:ubiquinone oxidoreductase.</title>
        <authorList>
            <person name="Watson J.D."/>
            <person name="Beckett-Jones B."/>
            <person name="Roy R.N."/>
            <person name="Green N.C."/>
            <person name="Flynn T.G."/>
        </authorList>
    </citation>
    <scope>NUCLEOTIDE SEQUENCE [GENOMIC DNA]</scope>
    <source>
        <strain>Sprague-Dawley</strain>
    </source>
</reference>
<dbReference type="EMBL" id="L38437">
    <property type="protein sequence ID" value="AAA79310.1"/>
    <property type="molecule type" value="Genomic_DNA"/>
</dbReference>
<dbReference type="PIR" id="JC4129">
    <property type="entry name" value="JC4129"/>
</dbReference>
<dbReference type="RefSeq" id="NP_062096.1">
    <property type="nucleotide sequence ID" value="NM_019223.1"/>
</dbReference>
<dbReference type="SMR" id="P52504"/>
<dbReference type="BioGRID" id="248120">
    <property type="interactions" value="1"/>
</dbReference>
<dbReference type="FunCoup" id="P52504">
    <property type="interactions" value="1610"/>
</dbReference>
<dbReference type="IntAct" id="P52504">
    <property type="interactions" value="1"/>
</dbReference>
<dbReference type="MINT" id="P52504"/>
<dbReference type="STRING" id="10116.ENSRNOP00000036045"/>
<dbReference type="iPTMnet" id="P52504"/>
<dbReference type="PhosphoSitePlus" id="P52504"/>
<dbReference type="SwissPalm" id="P52504"/>
<dbReference type="jPOST" id="P52504"/>
<dbReference type="PaxDb" id="10116-ENSRNOP00000036045"/>
<dbReference type="UCSC" id="RGD:3156">
    <property type="organism name" value="rat"/>
</dbReference>
<dbReference type="AGR" id="RGD:3156"/>
<dbReference type="RGD" id="3156">
    <property type="gene designation" value="Ndufs6"/>
</dbReference>
<dbReference type="eggNOG" id="KOG3456">
    <property type="taxonomic scope" value="Eukaryota"/>
</dbReference>
<dbReference type="InParanoid" id="P52504"/>
<dbReference type="PhylomeDB" id="P52504"/>
<dbReference type="Reactome" id="R-RNO-611105">
    <property type="pathway name" value="Respiratory electron transport"/>
</dbReference>
<dbReference type="Reactome" id="R-RNO-6799198">
    <property type="pathway name" value="Complex I biogenesis"/>
</dbReference>
<dbReference type="PRO" id="PR:P52504"/>
<dbReference type="Proteomes" id="UP000002494">
    <property type="component" value="Unplaced"/>
</dbReference>
<dbReference type="GO" id="GO:0005743">
    <property type="term" value="C:mitochondrial inner membrane"/>
    <property type="evidence" value="ECO:0007669"/>
    <property type="project" value="UniProtKB-SubCell"/>
</dbReference>
<dbReference type="GO" id="GO:0045271">
    <property type="term" value="C:respiratory chain complex I"/>
    <property type="evidence" value="ECO:0000250"/>
    <property type="project" value="UniProtKB"/>
</dbReference>
<dbReference type="GO" id="GO:0006120">
    <property type="term" value="P:mitochondrial electron transport, NADH to ubiquinone"/>
    <property type="evidence" value="ECO:0000318"/>
    <property type="project" value="GO_Central"/>
</dbReference>
<dbReference type="FunFam" id="2.60.260.40:FF:000002">
    <property type="entry name" value="NADH dehydrogenase [ubiquinone] iron-sulfur protein 6, mitochondrial"/>
    <property type="match status" value="1"/>
</dbReference>
<dbReference type="Gene3D" id="2.60.260.40">
    <property type="entry name" value="q5lls5 like domains"/>
    <property type="match status" value="1"/>
</dbReference>
<dbReference type="InterPro" id="IPR016668">
    <property type="entry name" value="NDUFS6"/>
</dbReference>
<dbReference type="InterPro" id="IPR019401">
    <property type="entry name" value="Znf_CHCC"/>
</dbReference>
<dbReference type="PANTHER" id="PTHR13156:SF0">
    <property type="entry name" value="NADH DEHYDROGENASE [UBIQUINONE] IRON-SULFUR PROTEIN 6, MITOCHONDRIAL"/>
    <property type="match status" value="1"/>
</dbReference>
<dbReference type="PANTHER" id="PTHR13156">
    <property type="entry name" value="NADH-UBIQUINONE OXIDOREDUCTASE 13 KD-A SUBUNIT"/>
    <property type="match status" value="1"/>
</dbReference>
<dbReference type="Pfam" id="PF10276">
    <property type="entry name" value="zf-CHCC"/>
    <property type="match status" value="1"/>
</dbReference>
<dbReference type="PIRSF" id="PIRSF016564">
    <property type="entry name" value="CI-13KD-A"/>
    <property type="match status" value="1"/>
</dbReference>
<keyword id="KW-0007">Acetylation</keyword>
<keyword id="KW-0249">Electron transport</keyword>
<keyword id="KW-0472">Membrane</keyword>
<keyword id="KW-0496">Mitochondrion</keyword>
<keyword id="KW-0999">Mitochondrion inner membrane</keyword>
<keyword id="KW-1185">Reference proteome</keyword>
<keyword id="KW-0679">Respiratory chain</keyword>
<keyword id="KW-0809">Transit peptide</keyword>
<keyword id="KW-0813">Transport</keyword>
<gene>
    <name type="primary">Ndufs6</name>
    <name type="synonym">Ip13</name>
</gene>
<feature type="transit peptide" description="Mitochondrion" evidence="1">
    <location>
        <begin position="1"/>
        <end position="20"/>
    </location>
</feature>
<feature type="chain" id="PRO_0000020021" description="NADH dehydrogenase [ubiquinone] iron-sulfur protein 6, mitochondrial">
    <location>
        <begin position="21"/>
        <end position="116"/>
    </location>
</feature>
<feature type="modified residue" description="N6-acetyllysine" evidence="3">
    <location>
        <position position="90"/>
    </location>
</feature>
<name>NDUS6_RAT</name>
<protein>
    <recommendedName>
        <fullName>NADH dehydrogenase [ubiquinone] iron-sulfur protein 6, mitochondrial</fullName>
    </recommendedName>
    <alternativeName>
        <fullName>Complex I-13kD-A</fullName>
        <shortName>CI-13kD-A</shortName>
    </alternativeName>
    <alternativeName>
        <fullName>NADH-ubiquinone oxidoreductase 13 kDa-A subunit</fullName>
    </alternativeName>
</protein>